<reference key="1">
    <citation type="journal article" date="1999" name="J. Biol. Chem.">
        <title>The membrane-spanning domains of caveolins-1 and -2 mediate the formation of caveolin hetero-oligomers. Implications for the assembly of caveolae membranes in vivo.</title>
        <authorList>
            <person name="Das K."/>
            <person name="Lewis R.Y."/>
            <person name="Scherer P.E."/>
            <person name="Lisanti M.P."/>
        </authorList>
    </citation>
    <scope>NUCLEOTIDE SEQUENCE [MRNA]</scope>
    <source>
        <strain>3T3-L1</strain>
    </source>
</reference>
<reference key="2">
    <citation type="submission" date="2000-10" db="EMBL/GenBank/DDBJ databases">
        <title>Identification of mouse caveolin-2 mRNA variant.</title>
        <authorList>
            <person name="Kogo H."/>
            <person name="Ishiguro K."/>
            <person name="Kuwaki S."/>
            <person name="Fujimoto T."/>
        </authorList>
    </citation>
    <scope>NUCLEOTIDE SEQUENCE [MRNA]</scope>
</reference>
<reference key="3">
    <citation type="journal article" date="2005" name="Science">
        <title>The transcriptional landscape of the mammalian genome.</title>
        <authorList>
            <person name="Carninci P."/>
            <person name="Kasukawa T."/>
            <person name="Katayama S."/>
            <person name="Gough J."/>
            <person name="Frith M.C."/>
            <person name="Maeda N."/>
            <person name="Oyama R."/>
            <person name="Ravasi T."/>
            <person name="Lenhard B."/>
            <person name="Wells C."/>
            <person name="Kodzius R."/>
            <person name="Shimokawa K."/>
            <person name="Bajic V.B."/>
            <person name="Brenner S.E."/>
            <person name="Batalov S."/>
            <person name="Forrest A.R."/>
            <person name="Zavolan M."/>
            <person name="Davis M.J."/>
            <person name="Wilming L.G."/>
            <person name="Aidinis V."/>
            <person name="Allen J.E."/>
            <person name="Ambesi-Impiombato A."/>
            <person name="Apweiler R."/>
            <person name="Aturaliya R.N."/>
            <person name="Bailey T.L."/>
            <person name="Bansal M."/>
            <person name="Baxter L."/>
            <person name="Beisel K.W."/>
            <person name="Bersano T."/>
            <person name="Bono H."/>
            <person name="Chalk A.M."/>
            <person name="Chiu K.P."/>
            <person name="Choudhary V."/>
            <person name="Christoffels A."/>
            <person name="Clutterbuck D.R."/>
            <person name="Crowe M.L."/>
            <person name="Dalla E."/>
            <person name="Dalrymple B.P."/>
            <person name="de Bono B."/>
            <person name="Della Gatta G."/>
            <person name="di Bernardo D."/>
            <person name="Down T."/>
            <person name="Engstrom P."/>
            <person name="Fagiolini M."/>
            <person name="Faulkner G."/>
            <person name="Fletcher C.F."/>
            <person name="Fukushima T."/>
            <person name="Furuno M."/>
            <person name="Futaki S."/>
            <person name="Gariboldi M."/>
            <person name="Georgii-Hemming P."/>
            <person name="Gingeras T.R."/>
            <person name="Gojobori T."/>
            <person name="Green R.E."/>
            <person name="Gustincich S."/>
            <person name="Harbers M."/>
            <person name="Hayashi Y."/>
            <person name="Hensch T.K."/>
            <person name="Hirokawa N."/>
            <person name="Hill D."/>
            <person name="Huminiecki L."/>
            <person name="Iacono M."/>
            <person name="Ikeo K."/>
            <person name="Iwama A."/>
            <person name="Ishikawa T."/>
            <person name="Jakt M."/>
            <person name="Kanapin A."/>
            <person name="Katoh M."/>
            <person name="Kawasawa Y."/>
            <person name="Kelso J."/>
            <person name="Kitamura H."/>
            <person name="Kitano H."/>
            <person name="Kollias G."/>
            <person name="Krishnan S.P."/>
            <person name="Kruger A."/>
            <person name="Kummerfeld S.K."/>
            <person name="Kurochkin I.V."/>
            <person name="Lareau L.F."/>
            <person name="Lazarevic D."/>
            <person name="Lipovich L."/>
            <person name="Liu J."/>
            <person name="Liuni S."/>
            <person name="McWilliam S."/>
            <person name="Madan Babu M."/>
            <person name="Madera M."/>
            <person name="Marchionni L."/>
            <person name="Matsuda H."/>
            <person name="Matsuzawa S."/>
            <person name="Miki H."/>
            <person name="Mignone F."/>
            <person name="Miyake S."/>
            <person name="Morris K."/>
            <person name="Mottagui-Tabar S."/>
            <person name="Mulder N."/>
            <person name="Nakano N."/>
            <person name="Nakauchi H."/>
            <person name="Ng P."/>
            <person name="Nilsson R."/>
            <person name="Nishiguchi S."/>
            <person name="Nishikawa S."/>
            <person name="Nori F."/>
            <person name="Ohara O."/>
            <person name="Okazaki Y."/>
            <person name="Orlando V."/>
            <person name="Pang K.C."/>
            <person name="Pavan W.J."/>
            <person name="Pavesi G."/>
            <person name="Pesole G."/>
            <person name="Petrovsky N."/>
            <person name="Piazza S."/>
            <person name="Reed J."/>
            <person name="Reid J.F."/>
            <person name="Ring B.Z."/>
            <person name="Ringwald M."/>
            <person name="Rost B."/>
            <person name="Ruan Y."/>
            <person name="Salzberg S.L."/>
            <person name="Sandelin A."/>
            <person name="Schneider C."/>
            <person name="Schoenbach C."/>
            <person name="Sekiguchi K."/>
            <person name="Semple C.A."/>
            <person name="Seno S."/>
            <person name="Sessa L."/>
            <person name="Sheng Y."/>
            <person name="Shibata Y."/>
            <person name="Shimada H."/>
            <person name="Shimada K."/>
            <person name="Silva D."/>
            <person name="Sinclair B."/>
            <person name="Sperling S."/>
            <person name="Stupka E."/>
            <person name="Sugiura K."/>
            <person name="Sultana R."/>
            <person name="Takenaka Y."/>
            <person name="Taki K."/>
            <person name="Tammoja K."/>
            <person name="Tan S.L."/>
            <person name="Tang S."/>
            <person name="Taylor M.S."/>
            <person name="Tegner J."/>
            <person name="Teichmann S.A."/>
            <person name="Ueda H.R."/>
            <person name="van Nimwegen E."/>
            <person name="Verardo R."/>
            <person name="Wei C.L."/>
            <person name="Yagi K."/>
            <person name="Yamanishi H."/>
            <person name="Zabarovsky E."/>
            <person name="Zhu S."/>
            <person name="Zimmer A."/>
            <person name="Hide W."/>
            <person name="Bult C."/>
            <person name="Grimmond S.M."/>
            <person name="Teasdale R.D."/>
            <person name="Liu E.T."/>
            <person name="Brusic V."/>
            <person name="Quackenbush J."/>
            <person name="Wahlestedt C."/>
            <person name="Mattick J.S."/>
            <person name="Hume D.A."/>
            <person name="Kai C."/>
            <person name="Sasaki D."/>
            <person name="Tomaru Y."/>
            <person name="Fukuda S."/>
            <person name="Kanamori-Katayama M."/>
            <person name="Suzuki M."/>
            <person name="Aoki J."/>
            <person name="Arakawa T."/>
            <person name="Iida J."/>
            <person name="Imamura K."/>
            <person name="Itoh M."/>
            <person name="Kato T."/>
            <person name="Kawaji H."/>
            <person name="Kawagashira N."/>
            <person name="Kawashima T."/>
            <person name="Kojima M."/>
            <person name="Kondo S."/>
            <person name="Konno H."/>
            <person name="Nakano K."/>
            <person name="Ninomiya N."/>
            <person name="Nishio T."/>
            <person name="Okada M."/>
            <person name="Plessy C."/>
            <person name="Shibata K."/>
            <person name="Shiraki T."/>
            <person name="Suzuki S."/>
            <person name="Tagami M."/>
            <person name="Waki K."/>
            <person name="Watahiki A."/>
            <person name="Okamura-Oho Y."/>
            <person name="Suzuki H."/>
            <person name="Kawai J."/>
            <person name="Hayashizaki Y."/>
        </authorList>
    </citation>
    <scope>NUCLEOTIDE SEQUENCE [LARGE SCALE MRNA]</scope>
    <source>
        <strain>C57BL/6J</strain>
        <tissue>Bone marrow</tissue>
        <tissue>Inner ear</tissue>
        <tissue>Lung</tissue>
        <tissue>Tongue</tissue>
    </source>
</reference>
<reference key="4">
    <citation type="journal article" date="2004" name="Genome Res.">
        <title>The status, quality, and expansion of the NIH full-length cDNA project: the Mammalian Gene Collection (MGC).</title>
        <authorList>
            <consortium name="The MGC Project Team"/>
        </authorList>
    </citation>
    <scope>NUCLEOTIDE SEQUENCE [LARGE SCALE MRNA]</scope>
    <source>
        <strain>FVB/N</strain>
        <tissue>Mammary gland</tissue>
    </source>
</reference>
<reference key="5">
    <citation type="journal article" date="2002" name="J. Biol. Chem.">
        <title>Src-induced phosphorylation of caveolin-2 on tyrosine 19. Phospho-caveolin-2 (Tyr(P)19) is localized near focal adhesions, remains associated with lipid rafts/caveolae, but no longer forms a high molecular mass hetero-oligomer with caveolin-1.</title>
        <authorList>
            <person name="Lee H."/>
            <person name="Park D.S."/>
            <person name="Wang X.B."/>
            <person name="Scherer P.E."/>
            <person name="Schwartz P.E."/>
            <person name="Lisanti M.P."/>
        </authorList>
    </citation>
    <scope>PHOSPHORYLATION AT TYR-19</scope>
</reference>
<reference key="6">
    <citation type="journal article" date="2007" name="Proc. Natl. Acad. Sci. U.S.A.">
        <title>Large-scale phosphorylation analysis of mouse liver.</title>
        <authorList>
            <person name="Villen J."/>
            <person name="Beausoleil S.A."/>
            <person name="Gerber S.A."/>
            <person name="Gygi S.P."/>
        </authorList>
    </citation>
    <scope>IDENTIFICATION BY MASS SPECTROMETRY [LARGE SCALE ANALYSIS]</scope>
    <source>
        <tissue>Liver</tissue>
    </source>
</reference>
<reference key="7">
    <citation type="journal article" date="2010" name="Cell">
        <title>A tissue-specific atlas of mouse protein phosphorylation and expression.</title>
        <authorList>
            <person name="Huttlin E.L."/>
            <person name="Jedrychowski M.P."/>
            <person name="Elias J.E."/>
            <person name="Goswami T."/>
            <person name="Rad R."/>
            <person name="Beausoleil S.A."/>
            <person name="Villen J."/>
            <person name="Haas W."/>
            <person name="Sowa M.E."/>
            <person name="Gygi S.P."/>
        </authorList>
    </citation>
    <scope>PHOSPHORYLATION [LARGE SCALE ANALYSIS] AT TYR-19; SER-20; SER-23 AND TYR-27</scope>
    <scope>IDENTIFICATION BY MASS SPECTROMETRY [LARGE SCALE ANALYSIS]</scope>
    <source>
        <tissue>Brain</tissue>
        <tissue>Brown adipose tissue</tissue>
        <tissue>Heart</tissue>
        <tissue>Kidney</tissue>
        <tissue>Lung</tissue>
        <tissue>Pancreas</tissue>
        <tissue>Spleen</tissue>
        <tissue>Testis</tissue>
    </source>
</reference>
<comment type="function">
    <text evidence="1">May act as a scaffolding protein within caveolar membranes. Interacts directly with G-protein alpha subunits and can functionally regulate their activity. Acts as an accessory protein in conjunction with CAV1 in targeting to lipid rafts and driving caveolae formation. The Ser-36 phosphorylated form has a role in modulating mitosis in endothelial cells. Positive regulator of cellular mitogenesis of the MAPK signaling pathway. Required for the insulin-stimulated nuclear translocation and activation of MAPK1 and STAT3, and the subsequent regulation of cell cycle progression (By similarity).</text>
</comment>
<comment type="subunit">
    <text evidence="1">Monomer or homodimer. Interacts with CAV1; the interaction forms a stable heterooligomeric complex that is required for targeting to lipid rafts and for caveolae formation. Tyrosine phosphorylated forms do not form heterooligomers with the Tyr-19-phosphorylated form existing as a monomer or dimer, and the Tyr-27-form as a monomer only. Interacts (tyrosine phosphorylated form) with the SH2 domain-containing proteins, RASA1, NCK1 and SRC. Interacts (tyrosine phosphorylated form) with INSR, the interaction (Tyr-27-phosphorylated form) is increased on insulin stimulation. Interacts (Tyr-19 phosphorylated form) with MAPK1 (phosphorylated form); the interaction, promoted by insulin, leads to nuclear location and MAPK1 activation. Interacts with STAT3; the interaction is increased on insulin-induced tyrosine phosphorylation leading to STAT activation (By similarity).</text>
</comment>
<comment type="subcellular location">
    <subcellularLocation>
        <location>Nucleus</location>
    </subcellularLocation>
    <subcellularLocation>
        <location>Cytoplasm</location>
    </subcellularLocation>
    <subcellularLocation>
        <location>Golgi apparatus membrane</location>
        <topology>Peripheral membrane protein</topology>
    </subcellularLocation>
    <subcellularLocation>
        <location>Cell membrane</location>
        <topology>Peripheral membrane protein</topology>
    </subcellularLocation>
    <subcellularLocation>
        <location>Membrane</location>
        <location>Caveola</location>
        <topology>Peripheral membrane protein</topology>
    </subcellularLocation>
    <text evidence="1">Potential hairpin-like structure in the membrane. Membrane protein of caveolae. Tyr-19-phosphorylated form is enriched at sites of cell-cell contact and is translocated to the nucleus in complex with MAPK1 in response to insulin. Tyr-27-phosphorylated form is located both in the cytoplasm and plasma membrane. CAV1-mediated Ser-23-phosphorylated form locates to the plasma membrane. Ser-36-phosphorylated form resides in intracellular compartments (By similarity).</text>
</comment>
<comment type="PTM">
    <text evidence="1">Phosphorylated on serine and tyrosine residues. CAV1 promotes phosphorylation on Ser-23 which then targets the complex to the plasma membrane, lipid rafts and caveolae. Phosphorylation on Ser-36 appears to modulate mitosis in endothelial cells. Phosphorylation on both Tyr-19 and Tyr-27 is required for insulin-induced 'Ser-727' phosphorylation of STAT3 and its activation. Phosphorylation on Tyr-19 is required for insulin-induced phosphorylation of MAPK1 and DNA binding of STAT3. Tyrosine phosphorylation is induced by both EGF and insulin (By similarity).</text>
</comment>
<comment type="similarity">
    <text evidence="5">Belongs to the caveolin family.</text>
</comment>
<protein>
    <recommendedName>
        <fullName>Caveolin-2</fullName>
    </recommendedName>
</protein>
<proteinExistence type="evidence at protein level"/>
<gene>
    <name type="primary">Cav2</name>
</gene>
<keyword id="KW-1003">Cell membrane</keyword>
<keyword id="KW-0963">Cytoplasm</keyword>
<keyword id="KW-0333">Golgi apparatus</keyword>
<keyword id="KW-0472">Membrane</keyword>
<keyword id="KW-0539">Nucleus</keyword>
<keyword id="KW-0597">Phosphoprotein</keyword>
<keyword id="KW-1185">Reference proteome</keyword>
<organism>
    <name type="scientific">Mus musculus</name>
    <name type="common">Mouse</name>
    <dbReference type="NCBI Taxonomy" id="10090"/>
    <lineage>
        <taxon>Eukaryota</taxon>
        <taxon>Metazoa</taxon>
        <taxon>Chordata</taxon>
        <taxon>Craniata</taxon>
        <taxon>Vertebrata</taxon>
        <taxon>Euteleostomi</taxon>
        <taxon>Mammalia</taxon>
        <taxon>Eutheria</taxon>
        <taxon>Euarchontoglires</taxon>
        <taxon>Glires</taxon>
        <taxon>Rodentia</taxon>
        <taxon>Myomorpha</taxon>
        <taxon>Muroidea</taxon>
        <taxon>Muridae</taxon>
        <taxon>Murinae</taxon>
        <taxon>Mus</taxon>
        <taxon>Mus</taxon>
    </lineage>
</organism>
<feature type="chain" id="PRO_0000144138" description="Caveolin-2">
    <location>
        <begin position="1"/>
        <end position="162"/>
    </location>
</feature>
<feature type="topological domain" description="Cytoplasmic" evidence="3">
    <location>
        <begin position="1"/>
        <end position="86"/>
    </location>
</feature>
<feature type="intramembrane region" description="Helical" evidence="3">
    <location>
        <begin position="87"/>
        <end position="107"/>
    </location>
</feature>
<feature type="topological domain" description="Cytoplasmic" evidence="3">
    <location>
        <begin position="108"/>
        <end position="162"/>
    </location>
</feature>
<feature type="modified residue" description="Phosphotyrosine; by SRC" evidence="4 6">
    <location>
        <position position="19"/>
    </location>
</feature>
<feature type="modified residue" description="Phosphoserine" evidence="6">
    <location>
        <position position="20"/>
    </location>
</feature>
<feature type="modified residue" description="Phosphoserine" evidence="6">
    <location>
        <position position="23"/>
    </location>
</feature>
<feature type="modified residue" description="Phosphotyrosine" evidence="6">
    <location>
        <position position="27"/>
    </location>
</feature>
<feature type="modified residue" description="Phosphoserine" evidence="2">
    <location>
        <position position="36"/>
    </location>
</feature>
<name>CAV2_MOUSE</name>
<evidence type="ECO:0000250" key="1"/>
<evidence type="ECO:0000250" key="2">
    <source>
        <dbReference type="UniProtKB" id="P51636"/>
    </source>
</evidence>
<evidence type="ECO:0000255" key="3"/>
<evidence type="ECO:0000269" key="4">
    <source>
    </source>
</evidence>
<evidence type="ECO:0000305" key="5"/>
<evidence type="ECO:0007744" key="6">
    <source>
    </source>
</evidence>
<accession>Q9WVC3</accession>
<accession>Q3TYR4</accession>
<dbReference type="EMBL" id="AF141322">
    <property type="protein sequence ID" value="AAD42349.1"/>
    <property type="molecule type" value="mRNA"/>
</dbReference>
<dbReference type="EMBL" id="AB049604">
    <property type="protein sequence ID" value="BAB61728.1"/>
    <property type="molecule type" value="mRNA"/>
</dbReference>
<dbReference type="EMBL" id="AK004663">
    <property type="protein sequence ID" value="BAB23453.1"/>
    <property type="molecule type" value="mRNA"/>
</dbReference>
<dbReference type="EMBL" id="AK009913">
    <property type="protein sequence ID" value="BAB26582.1"/>
    <property type="molecule type" value="mRNA"/>
</dbReference>
<dbReference type="EMBL" id="AK151397">
    <property type="protein sequence ID" value="BAE30365.1"/>
    <property type="molecule type" value="mRNA"/>
</dbReference>
<dbReference type="EMBL" id="AK158419">
    <property type="protein sequence ID" value="BAE34498.1"/>
    <property type="molecule type" value="mRNA"/>
</dbReference>
<dbReference type="EMBL" id="BC023095">
    <property type="protein sequence ID" value="AAH23095.1"/>
    <property type="molecule type" value="mRNA"/>
</dbReference>
<dbReference type="CCDS" id="CCDS19923.1"/>
<dbReference type="RefSeq" id="NP_058596.1">
    <property type="nucleotide sequence ID" value="NM_016900.4"/>
</dbReference>
<dbReference type="SMR" id="Q9WVC3"/>
<dbReference type="FunCoup" id="Q9WVC3">
    <property type="interactions" value="656"/>
</dbReference>
<dbReference type="IntAct" id="Q9WVC3">
    <property type="interactions" value="1"/>
</dbReference>
<dbReference type="STRING" id="10090.ENSMUSP00000000058"/>
<dbReference type="iPTMnet" id="Q9WVC3"/>
<dbReference type="PhosphoSitePlus" id="Q9WVC3"/>
<dbReference type="SwissPalm" id="Q9WVC3"/>
<dbReference type="jPOST" id="Q9WVC3"/>
<dbReference type="PaxDb" id="10090-ENSMUSP00000000058"/>
<dbReference type="PeptideAtlas" id="Q9WVC3"/>
<dbReference type="ProteomicsDB" id="265336"/>
<dbReference type="Pumba" id="Q9WVC3"/>
<dbReference type="Antibodypedia" id="4606">
    <property type="antibodies" value="414 antibodies from 38 providers"/>
</dbReference>
<dbReference type="DNASU" id="12390"/>
<dbReference type="Ensembl" id="ENSMUST00000000058.7">
    <property type="protein sequence ID" value="ENSMUSP00000000058.7"/>
    <property type="gene ID" value="ENSMUSG00000000058.7"/>
</dbReference>
<dbReference type="GeneID" id="12390"/>
<dbReference type="KEGG" id="mmu:12390"/>
<dbReference type="UCSC" id="uc009azm.2">
    <property type="organism name" value="mouse"/>
</dbReference>
<dbReference type="AGR" id="MGI:107571"/>
<dbReference type="CTD" id="858"/>
<dbReference type="MGI" id="MGI:107571">
    <property type="gene designation" value="Cav2"/>
</dbReference>
<dbReference type="VEuPathDB" id="HostDB:ENSMUSG00000000058"/>
<dbReference type="eggNOG" id="ENOG502RZYX">
    <property type="taxonomic scope" value="Eukaryota"/>
</dbReference>
<dbReference type="GeneTree" id="ENSGT00950000183006"/>
<dbReference type="InParanoid" id="Q9WVC3"/>
<dbReference type="OMA" id="TRIFMDD"/>
<dbReference type="OrthoDB" id="5917823at2759"/>
<dbReference type="PhylomeDB" id="Q9WVC3"/>
<dbReference type="TreeFam" id="TF315736"/>
<dbReference type="Reactome" id="R-MMU-9009391">
    <property type="pathway name" value="Extra-nuclear estrogen signaling"/>
</dbReference>
<dbReference type="BioGRID-ORCS" id="12390">
    <property type="hits" value="3 hits in 82 CRISPR screens"/>
</dbReference>
<dbReference type="ChiTaRS" id="Cav2">
    <property type="organism name" value="mouse"/>
</dbReference>
<dbReference type="PRO" id="PR:Q9WVC3"/>
<dbReference type="Proteomes" id="UP000000589">
    <property type="component" value="Chromosome 6"/>
</dbReference>
<dbReference type="RNAct" id="Q9WVC3">
    <property type="molecule type" value="protein"/>
</dbReference>
<dbReference type="Bgee" id="ENSMUSG00000000058">
    <property type="expression patterns" value="Expressed in epididymal fat pad and 239 other cell types or tissues"/>
</dbReference>
<dbReference type="ExpressionAtlas" id="Q9WVC3">
    <property type="expression patterns" value="baseline and differential"/>
</dbReference>
<dbReference type="GO" id="GO:0002080">
    <property type="term" value="C:acrosomal membrane"/>
    <property type="evidence" value="ECO:0000314"/>
    <property type="project" value="MGI"/>
</dbReference>
<dbReference type="GO" id="GO:0005901">
    <property type="term" value="C:caveola"/>
    <property type="evidence" value="ECO:0000314"/>
    <property type="project" value="MGI"/>
</dbReference>
<dbReference type="GO" id="GO:0002095">
    <property type="term" value="C:caveolar macromolecular signaling complex"/>
    <property type="evidence" value="ECO:0000314"/>
    <property type="project" value="MGI"/>
</dbReference>
<dbReference type="GO" id="GO:0031410">
    <property type="term" value="C:cytoplasmic vesicle"/>
    <property type="evidence" value="ECO:0000266"/>
    <property type="project" value="MGI"/>
</dbReference>
<dbReference type="GO" id="GO:0005925">
    <property type="term" value="C:focal adhesion"/>
    <property type="evidence" value="ECO:0007669"/>
    <property type="project" value="Ensembl"/>
</dbReference>
<dbReference type="GO" id="GO:0000139">
    <property type="term" value="C:Golgi membrane"/>
    <property type="evidence" value="ECO:0007669"/>
    <property type="project" value="UniProtKB-SubCell"/>
</dbReference>
<dbReference type="GO" id="GO:0016020">
    <property type="term" value="C:membrane"/>
    <property type="evidence" value="ECO:0000314"/>
    <property type="project" value="MGI"/>
</dbReference>
<dbReference type="GO" id="GO:0045121">
    <property type="term" value="C:membrane raft"/>
    <property type="evidence" value="ECO:0000250"/>
    <property type="project" value="HGNC-UCL"/>
</dbReference>
<dbReference type="GO" id="GO:0005634">
    <property type="term" value="C:nucleus"/>
    <property type="evidence" value="ECO:0007669"/>
    <property type="project" value="UniProtKB-SubCell"/>
</dbReference>
<dbReference type="GO" id="GO:0048471">
    <property type="term" value="C:perinuclear region of cytoplasm"/>
    <property type="evidence" value="ECO:0000250"/>
    <property type="project" value="UniProtKB"/>
</dbReference>
<dbReference type="GO" id="GO:0005886">
    <property type="term" value="C:plasma membrane"/>
    <property type="evidence" value="ECO:0000314"/>
    <property type="project" value="MGI"/>
</dbReference>
<dbReference type="GO" id="GO:0044853">
    <property type="term" value="C:plasma membrane raft"/>
    <property type="evidence" value="ECO:0000250"/>
    <property type="project" value="UniProtKB"/>
</dbReference>
<dbReference type="GO" id="GO:0032991">
    <property type="term" value="C:protein-containing complex"/>
    <property type="evidence" value="ECO:0000314"/>
    <property type="project" value="BHF-UCL"/>
</dbReference>
<dbReference type="GO" id="GO:0030133">
    <property type="term" value="C:transport vesicle"/>
    <property type="evidence" value="ECO:0007669"/>
    <property type="project" value="Ensembl"/>
</dbReference>
<dbReference type="GO" id="GO:0031748">
    <property type="term" value="F:D1 dopamine receptor binding"/>
    <property type="evidence" value="ECO:0000250"/>
    <property type="project" value="UniProtKB"/>
</dbReference>
<dbReference type="GO" id="GO:0060090">
    <property type="term" value="F:molecular adaptor activity"/>
    <property type="evidence" value="ECO:0000314"/>
    <property type="project" value="BHF-UCL"/>
</dbReference>
<dbReference type="GO" id="GO:0046982">
    <property type="term" value="F:protein heterodimerization activity"/>
    <property type="evidence" value="ECO:0000353"/>
    <property type="project" value="BHF-UCL"/>
</dbReference>
<dbReference type="GO" id="GO:0042803">
    <property type="term" value="F:protein homodimerization activity"/>
    <property type="evidence" value="ECO:0000266"/>
    <property type="project" value="MGI"/>
</dbReference>
<dbReference type="GO" id="GO:0019901">
    <property type="term" value="F:protein kinase binding"/>
    <property type="evidence" value="ECO:0000314"/>
    <property type="project" value="BHF-UCL"/>
</dbReference>
<dbReference type="GO" id="GO:0030674">
    <property type="term" value="F:protein-macromolecule adaptor activity"/>
    <property type="evidence" value="ECO:0000314"/>
    <property type="project" value="BHF-UCL"/>
</dbReference>
<dbReference type="GO" id="GO:0097110">
    <property type="term" value="F:scaffold protein binding"/>
    <property type="evidence" value="ECO:0000353"/>
    <property type="project" value="BHF-UCL"/>
</dbReference>
<dbReference type="GO" id="GO:0071711">
    <property type="term" value="P:basement membrane organization"/>
    <property type="evidence" value="ECO:0000315"/>
    <property type="project" value="MGI"/>
</dbReference>
<dbReference type="GO" id="GO:0070836">
    <property type="term" value="P:caveola assembly"/>
    <property type="evidence" value="ECO:0000250"/>
    <property type="project" value="UniProtKB"/>
</dbReference>
<dbReference type="GO" id="GO:0008283">
    <property type="term" value="P:cell population proliferation"/>
    <property type="evidence" value="ECO:0000315"/>
    <property type="project" value="MGI"/>
</dbReference>
<dbReference type="GO" id="GO:0006897">
    <property type="term" value="P:endocytosis"/>
    <property type="evidence" value="ECO:0000304"/>
    <property type="project" value="MGI"/>
</dbReference>
<dbReference type="GO" id="GO:0007029">
    <property type="term" value="P:endoplasmic reticulum organization"/>
    <property type="evidence" value="ECO:0000315"/>
    <property type="project" value="MGI"/>
</dbReference>
<dbReference type="GO" id="GO:0001935">
    <property type="term" value="P:endothelial cell proliferation"/>
    <property type="evidence" value="ECO:0000315"/>
    <property type="project" value="MGI"/>
</dbReference>
<dbReference type="GO" id="GO:0008286">
    <property type="term" value="P:insulin receptor signaling pathway"/>
    <property type="evidence" value="ECO:0007669"/>
    <property type="project" value="Ensembl"/>
</dbReference>
<dbReference type="GO" id="GO:0007005">
    <property type="term" value="P:mitochondrion organization"/>
    <property type="evidence" value="ECO:0000315"/>
    <property type="project" value="MGI"/>
</dbReference>
<dbReference type="GO" id="GO:0001937">
    <property type="term" value="P:negative regulation of endothelial cell proliferation"/>
    <property type="evidence" value="ECO:0000315"/>
    <property type="project" value="MGI"/>
</dbReference>
<dbReference type="GO" id="GO:0014859">
    <property type="term" value="P:negative regulation of skeletal muscle cell proliferation"/>
    <property type="evidence" value="ECO:0000315"/>
    <property type="project" value="MGI"/>
</dbReference>
<dbReference type="GO" id="GO:0030512">
    <property type="term" value="P:negative regulation of transforming growth factor beta receptor signaling pathway"/>
    <property type="evidence" value="ECO:0000316"/>
    <property type="project" value="MGI"/>
</dbReference>
<dbReference type="GO" id="GO:0044794">
    <property type="term" value="P:positive regulation by host of viral process"/>
    <property type="evidence" value="ECO:0007669"/>
    <property type="project" value="Ensembl"/>
</dbReference>
<dbReference type="GO" id="GO:0060161">
    <property type="term" value="P:positive regulation of dopamine receptor signaling pathway"/>
    <property type="evidence" value="ECO:0000250"/>
    <property type="project" value="UniProtKB"/>
</dbReference>
<dbReference type="GO" id="GO:0001938">
    <property type="term" value="P:positive regulation of endothelial cell proliferation"/>
    <property type="evidence" value="ECO:0000316"/>
    <property type="project" value="MGI"/>
</dbReference>
<dbReference type="GO" id="GO:0043410">
    <property type="term" value="P:positive regulation of MAPK cascade"/>
    <property type="evidence" value="ECO:0007669"/>
    <property type="project" value="Ensembl"/>
</dbReference>
<dbReference type="GO" id="GO:0019065">
    <property type="term" value="P:receptor-mediated endocytosis of virus by host cell"/>
    <property type="evidence" value="ECO:0007669"/>
    <property type="project" value="Ensembl"/>
</dbReference>
<dbReference type="GO" id="GO:0007088">
    <property type="term" value="P:regulation of mitotic nuclear division"/>
    <property type="evidence" value="ECO:0007669"/>
    <property type="project" value="Ensembl"/>
</dbReference>
<dbReference type="GO" id="GO:0014856">
    <property type="term" value="P:skeletal muscle cell proliferation"/>
    <property type="evidence" value="ECO:0000315"/>
    <property type="project" value="MGI"/>
</dbReference>
<dbReference type="GO" id="GO:0048741">
    <property type="term" value="P:skeletal muscle fiber development"/>
    <property type="evidence" value="ECO:0000315"/>
    <property type="project" value="MGI"/>
</dbReference>
<dbReference type="GO" id="GO:0007179">
    <property type="term" value="P:transforming growth factor beta receptor signaling pathway"/>
    <property type="evidence" value="ECO:0000316"/>
    <property type="project" value="MGI"/>
</dbReference>
<dbReference type="GO" id="GO:0048278">
    <property type="term" value="P:vesicle docking"/>
    <property type="evidence" value="ECO:0000250"/>
    <property type="project" value="UniProtKB"/>
</dbReference>
<dbReference type="GO" id="GO:0006906">
    <property type="term" value="P:vesicle fusion"/>
    <property type="evidence" value="ECO:0000250"/>
    <property type="project" value="UniProtKB"/>
</dbReference>
<dbReference type="GO" id="GO:0019076">
    <property type="term" value="P:viral release from host cell"/>
    <property type="evidence" value="ECO:0007669"/>
    <property type="project" value="Ensembl"/>
</dbReference>
<dbReference type="InterPro" id="IPR001612">
    <property type="entry name" value="Caveolin"/>
</dbReference>
<dbReference type="InterPro" id="IPR018361">
    <property type="entry name" value="Caveolin_CS"/>
</dbReference>
<dbReference type="PANTHER" id="PTHR10844">
    <property type="entry name" value="CAVEOLIN"/>
    <property type="match status" value="1"/>
</dbReference>
<dbReference type="PANTHER" id="PTHR10844:SF3">
    <property type="entry name" value="CAVEOLIN-2"/>
    <property type="match status" value="1"/>
</dbReference>
<dbReference type="Pfam" id="PF01146">
    <property type="entry name" value="Caveolin"/>
    <property type="match status" value="1"/>
</dbReference>
<dbReference type="PROSITE" id="PS01210">
    <property type="entry name" value="CAVEOLIN"/>
    <property type="match status" value="1"/>
</dbReference>
<sequence>MGLETEKADVQLFMADDAYSHHSGVDYADPEKYVDSSHDRDPHQLNSHLKLGFEDLIAEPETTHSFDKVWICSHALFEISKYVMYKFLTVFLAIPLAFIAGILFATLSCLHIWILMPFVKTCLMVLPSVQTIWKSVTDVVIGPLCTSVGRSFSSVSMQLSHD</sequence>